<organism>
    <name type="scientific">Streptococcus pyogenes serotype M18 (strain MGAS8232)</name>
    <dbReference type="NCBI Taxonomy" id="186103"/>
    <lineage>
        <taxon>Bacteria</taxon>
        <taxon>Bacillati</taxon>
        <taxon>Bacillota</taxon>
        <taxon>Bacilli</taxon>
        <taxon>Lactobacillales</taxon>
        <taxon>Streptococcaceae</taxon>
        <taxon>Streptococcus</taxon>
    </lineage>
</organism>
<gene>
    <name evidence="1" type="primary">hslO</name>
    <name type="ordered locus">spyM18_0123</name>
</gene>
<proteinExistence type="inferred from homology"/>
<reference key="1">
    <citation type="journal article" date="2002" name="Proc. Natl. Acad. Sci. U.S.A.">
        <title>Genome sequence and comparative microarray analysis of serotype M18 group A Streptococcus strains associated with acute rheumatic fever outbreaks.</title>
        <authorList>
            <person name="Smoot J.C."/>
            <person name="Barbian K.D."/>
            <person name="Van Gompel J.J."/>
            <person name="Smoot L.M."/>
            <person name="Chaussee M.S."/>
            <person name="Sylva G.L."/>
            <person name="Sturdevant D.E."/>
            <person name="Ricklefs S.M."/>
            <person name="Porcella S.F."/>
            <person name="Parkins L.D."/>
            <person name="Beres S.B."/>
            <person name="Campbell D.S."/>
            <person name="Smith T.M."/>
            <person name="Zhang Q."/>
            <person name="Kapur V."/>
            <person name="Daly J.A."/>
            <person name="Veasy L.G."/>
            <person name="Musser J.M."/>
        </authorList>
    </citation>
    <scope>NUCLEOTIDE SEQUENCE [LARGE SCALE GENOMIC DNA]</scope>
    <source>
        <strain>MGAS8232</strain>
    </source>
</reference>
<protein>
    <recommendedName>
        <fullName evidence="1">33 kDa chaperonin</fullName>
    </recommendedName>
    <alternativeName>
        <fullName evidence="1">Heat shock protein 33 homolog</fullName>
        <shortName evidence="1">HSP33</shortName>
    </alternativeName>
</protein>
<comment type="function">
    <text evidence="1">Redox regulated molecular chaperone. Protects both thermally unfolding and oxidatively damaged proteins from irreversible aggregation. Plays an important role in the bacterial defense system toward oxidative stress.</text>
</comment>
<comment type="subcellular location">
    <subcellularLocation>
        <location evidence="1">Cytoplasm</location>
    </subcellularLocation>
</comment>
<comment type="PTM">
    <text evidence="1">Under oxidizing conditions two disulfide bonds are formed involving the reactive cysteines. Under reducing conditions zinc is bound to the reactive cysteines and the protein is inactive.</text>
</comment>
<comment type="similarity">
    <text evidence="1">Belongs to the HSP33 family.</text>
</comment>
<name>HSLO_STRP8</name>
<sequence>MDKIIKSIAQSGAFRAYVLDSTETVALAQEKHNTLSSSTVALGRTLIANQILAANQKGDSKITVKVIGDSSFGHIISVADTKGHVKGYIQNTGVDIKKTATGEVLVGPFMGNGHFVTIIDYGTGNPYTSTTPLITGEIGEDFAYYLTESEQTPSAIGLNVLLDENDKVKVAGGFMVQVLPGASEEEIARYEKRLQEMPAISHLLASKNHVDALLEAIYGDEPYKRLSEEPLSFQCDCSRERFEAALMTLPKADLQAMIDEDKGAEIVCQFCGTKYQFNESDLEALINDKA</sequence>
<accession>Q8P2W5</accession>
<keyword id="KW-0143">Chaperone</keyword>
<keyword id="KW-0963">Cytoplasm</keyword>
<keyword id="KW-1015">Disulfide bond</keyword>
<keyword id="KW-0676">Redox-active center</keyword>
<keyword id="KW-0862">Zinc</keyword>
<dbReference type="EMBL" id="AE009949">
    <property type="protein sequence ID" value="AAL96934.1"/>
    <property type="molecule type" value="Genomic_DNA"/>
</dbReference>
<dbReference type="RefSeq" id="WP_002986499.1">
    <property type="nucleotide sequence ID" value="NC_003485.1"/>
</dbReference>
<dbReference type="SMR" id="Q8P2W5"/>
<dbReference type="KEGG" id="spm:spyM18_0123"/>
<dbReference type="HOGENOM" id="CLU_054493_1_0_9"/>
<dbReference type="GO" id="GO:0005737">
    <property type="term" value="C:cytoplasm"/>
    <property type="evidence" value="ECO:0007669"/>
    <property type="project" value="UniProtKB-SubCell"/>
</dbReference>
<dbReference type="GO" id="GO:0044183">
    <property type="term" value="F:protein folding chaperone"/>
    <property type="evidence" value="ECO:0007669"/>
    <property type="project" value="TreeGrafter"/>
</dbReference>
<dbReference type="GO" id="GO:0051082">
    <property type="term" value="F:unfolded protein binding"/>
    <property type="evidence" value="ECO:0007669"/>
    <property type="project" value="UniProtKB-UniRule"/>
</dbReference>
<dbReference type="GO" id="GO:0042026">
    <property type="term" value="P:protein refolding"/>
    <property type="evidence" value="ECO:0007669"/>
    <property type="project" value="TreeGrafter"/>
</dbReference>
<dbReference type="CDD" id="cd00498">
    <property type="entry name" value="Hsp33"/>
    <property type="match status" value="1"/>
</dbReference>
<dbReference type="Gene3D" id="3.55.30.10">
    <property type="entry name" value="Hsp33 domain"/>
    <property type="match status" value="1"/>
</dbReference>
<dbReference type="Gene3D" id="3.90.1280.10">
    <property type="entry name" value="HSP33 redox switch-like"/>
    <property type="match status" value="1"/>
</dbReference>
<dbReference type="HAMAP" id="MF_00117">
    <property type="entry name" value="HslO"/>
    <property type="match status" value="1"/>
</dbReference>
<dbReference type="InterPro" id="IPR000397">
    <property type="entry name" value="Heat_shock_Hsp33"/>
</dbReference>
<dbReference type="InterPro" id="IPR016154">
    <property type="entry name" value="Heat_shock_Hsp33_C"/>
</dbReference>
<dbReference type="InterPro" id="IPR016153">
    <property type="entry name" value="Heat_shock_Hsp33_N"/>
</dbReference>
<dbReference type="NCBIfam" id="NF001033">
    <property type="entry name" value="PRK00114.1"/>
    <property type="match status" value="1"/>
</dbReference>
<dbReference type="PANTHER" id="PTHR30111">
    <property type="entry name" value="33 KDA CHAPERONIN"/>
    <property type="match status" value="1"/>
</dbReference>
<dbReference type="PANTHER" id="PTHR30111:SF1">
    <property type="entry name" value="33 KDA CHAPERONIN"/>
    <property type="match status" value="1"/>
</dbReference>
<dbReference type="Pfam" id="PF01430">
    <property type="entry name" value="HSP33"/>
    <property type="match status" value="1"/>
</dbReference>
<dbReference type="PIRSF" id="PIRSF005261">
    <property type="entry name" value="Heat_shock_Hsp33"/>
    <property type="match status" value="1"/>
</dbReference>
<dbReference type="SUPFAM" id="SSF64397">
    <property type="entry name" value="Hsp33 domain"/>
    <property type="match status" value="1"/>
</dbReference>
<dbReference type="SUPFAM" id="SSF118352">
    <property type="entry name" value="HSP33 redox switch-like"/>
    <property type="match status" value="1"/>
</dbReference>
<evidence type="ECO:0000255" key="1">
    <source>
        <dbReference type="HAMAP-Rule" id="MF_00117"/>
    </source>
</evidence>
<feature type="chain" id="PRO_0000192215" description="33 kDa chaperonin">
    <location>
        <begin position="1"/>
        <end position="290"/>
    </location>
</feature>
<feature type="disulfide bond" description="Redox-active" evidence="1">
    <location>
        <begin position="235"/>
        <end position="237"/>
    </location>
</feature>
<feature type="disulfide bond" description="Redox-active" evidence="1">
    <location>
        <begin position="268"/>
        <end position="271"/>
    </location>
</feature>